<comment type="function">
    <text evidence="1">GTPase that plays an essential role in the late steps of ribosome biogenesis.</text>
</comment>
<comment type="subunit">
    <text evidence="1">Associates with the 50S ribosomal subunit.</text>
</comment>
<comment type="similarity">
    <text evidence="1">Belongs to the TRAFAC class TrmE-Era-EngA-EngB-Septin-like GTPase superfamily. EngA (Der) GTPase family.</text>
</comment>
<evidence type="ECO:0000255" key="1">
    <source>
        <dbReference type="HAMAP-Rule" id="MF_00195"/>
    </source>
</evidence>
<gene>
    <name evidence="1" type="primary">der</name>
    <name type="synonym">engA</name>
    <name type="ordered locus">SSU05_1726</name>
</gene>
<sequence length="436" mass="48988">MALPTIAIVGRPNVGKSTLFNRIAGERISIVEDVEGVTRDRIYATGEWLNRKFSLIDTGGIDDVDAPFMEQIKHQAEIAMDEADVIVFVVSGKEGVTDADEYVSRILYKTNKPVILVVNKVDNPEMRNDIYDFYSLGLGDPYPVSSVHGIGTGDVLDAIIENLPAQEAEENPDIIKFSLIGRPNVGKSSLINAILGEERVIASPVAGTTRDAIDTHFTDPEGQEFTMIDTAGMRKSGKVYENTEKYSVMRAMRAIERSDVILMVINAEEGIREYDKRIAGFAHEAGKGMIIVVNKWDTLEKDNHTMKQWEDDIRDQFQYLSYAPIIFVSALTKQRLHKLPEMIKAISESQNTRIPSAVLNDVIMDAIAINPTPTDKGKRLKIFYATQVATKPPTFVVFVNEEELMHFSYMRFLENQIRKAFVFEGTPIHLIARKRK</sequence>
<organism>
    <name type="scientific">Streptococcus suis (strain 05ZYH33)</name>
    <dbReference type="NCBI Taxonomy" id="391295"/>
    <lineage>
        <taxon>Bacteria</taxon>
        <taxon>Bacillati</taxon>
        <taxon>Bacillota</taxon>
        <taxon>Bacilli</taxon>
        <taxon>Lactobacillales</taxon>
        <taxon>Streptococcaceae</taxon>
        <taxon>Streptococcus</taxon>
    </lineage>
</organism>
<name>DER_STRSY</name>
<feature type="chain" id="PRO_1000011761" description="GTPase Der">
    <location>
        <begin position="1"/>
        <end position="436"/>
    </location>
</feature>
<feature type="domain" description="EngA-type G 1">
    <location>
        <begin position="4"/>
        <end position="167"/>
    </location>
</feature>
<feature type="domain" description="EngA-type G 2">
    <location>
        <begin position="175"/>
        <end position="351"/>
    </location>
</feature>
<feature type="domain" description="KH-like" evidence="1">
    <location>
        <begin position="352"/>
        <end position="436"/>
    </location>
</feature>
<feature type="binding site" evidence="1">
    <location>
        <begin position="10"/>
        <end position="17"/>
    </location>
    <ligand>
        <name>GTP</name>
        <dbReference type="ChEBI" id="CHEBI:37565"/>
        <label>1</label>
    </ligand>
</feature>
<feature type="binding site" evidence="1">
    <location>
        <begin position="57"/>
        <end position="61"/>
    </location>
    <ligand>
        <name>GTP</name>
        <dbReference type="ChEBI" id="CHEBI:37565"/>
        <label>1</label>
    </ligand>
</feature>
<feature type="binding site" evidence="1">
    <location>
        <begin position="119"/>
        <end position="122"/>
    </location>
    <ligand>
        <name>GTP</name>
        <dbReference type="ChEBI" id="CHEBI:37565"/>
        <label>1</label>
    </ligand>
</feature>
<feature type="binding site" evidence="1">
    <location>
        <begin position="181"/>
        <end position="188"/>
    </location>
    <ligand>
        <name>GTP</name>
        <dbReference type="ChEBI" id="CHEBI:37565"/>
        <label>2</label>
    </ligand>
</feature>
<feature type="binding site" evidence="1">
    <location>
        <begin position="229"/>
        <end position="233"/>
    </location>
    <ligand>
        <name>GTP</name>
        <dbReference type="ChEBI" id="CHEBI:37565"/>
        <label>2</label>
    </ligand>
</feature>
<feature type="binding site" evidence="1">
    <location>
        <begin position="294"/>
        <end position="297"/>
    </location>
    <ligand>
        <name>GTP</name>
        <dbReference type="ChEBI" id="CHEBI:37565"/>
        <label>2</label>
    </ligand>
</feature>
<protein>
    <recommendedName>
        <fullName evidence="1">GTPase Der</fullName>
    </recommendedName>
    <alternativeName>
        <fullName evidence="1">GTP-binding protein EngA</fullName>
    </alternativeName>
</protein>
<keyword id="KW-0342">GTP-binding</keyword>
<keyword id="KW-0547">Nucleotide-binding</keyword>
<keyword id="KW-0677">Repeat</keyword>
<keyword id="KW-0690">Ribosome biogenesis</keyword>
<dbReference type="EMBL" id="CP000407">
    <property type="protein sequence ID" value="ABP90692.1"/>
    <property type="molecule type" value="Genomic_DNA"/>
</dbReference>
<dbReference type="SMR" id="A4VX53"/>
<dbReference type="STRING" id="391295.SSU05_1726"/>
<dbReference type="KEGG" id="ssu:SSU05_1726"/>
<dbReference type="eggNOG" id="COG1160">
    <property type="taxonomic scope" value="Bacteria"/>
</dbReference>
<dbReference type="HOGENOM" id="CLU_016077_6_2_9"/>
<dbReference type="GO" id="GO:0005525">
    <property type="term" value="F:GTP binding"/>
    <property type="evidence" value="ECO:0007669"/>
    <property type="project" value="UniProtKB-UniRule"/>
</dbReference>
<dbReference type="GO" id="GO:0043022">
    <property type="term" value="F:ribosome binding"/>
    <property type="evidence" value="ECO:0007669"/>
    <property type="project" value="TreeGrafter"/>
</dbReference>
<dbReference type="GO" id="GO:0042254">
    <property type="term" value="P:ribosome biogenesis"/>
    <property type="evidence" value="ECO:0007669"/>
    <property type="project" value="UniProtKB-KW"/>
</dbReference>
<dbReference type="CDD" id="cd01894">
    <property type="entry name" value="EngA1"/>
    <property type="match status" value="1"/>
</dbReference>
<dbReference type="CDD" id="cd01895">
    <property type="entry name" value="EngA2"/>
    <property type="match status" value="1"/>
</dbReference>
<dbReference type="FunFam" id="3.30.300.20:FF:000004">
    <property type="entry name" value="GTPase Der"/>
    <property type="match status" value="1"/>
</dbReference>
<dbReference type="FunFam" id="3.40.50.300:FF:000040">
    <property type="entry name" value="GTPase Der"/>
    <property type="match status" value="1"/>
</dbReference>
<dbReference type="FunFam" id="3.40.50.300:FF:000057">
    <property type="entry name" value="GTPase Der"/>
    <property type="match status" value="1"/>
</dbReference>
<dbReference type="Gene3D" id="3.30.300.20">
    <property type="match status" value="1"/>
</dbReference>
<dbReference type="Gene3D" id="3.40.50.300">
    <property type="entry name" value="P-loop containing nucleotide triphosphate hydrolases"/>
    <property type="match status" value="2"/>
</dbReference>
<dbReference type="HAMAP" id="MF_00195">
    <property type="entry name" value="GTPase_Der"/>
    <property type="match status" value="1"/>
</dbReference>
<dbReference type="InterPro" id="IPR031166">
    <property type="entry name" value="G_ENGA"/>
</dbReference>
<dbReference type="InterPro" id="IPR006073">
    <property type="entry name" value="GTP-bd"/>
</dbReference>
<dbReference type="InterPro" id="IPR016484">
    <property type="entry name" value="GTPase_Der"/>
</dbReference>
<dbReference type="InterPro" id="IPR032859">
    <property type="entry name" value="KH_dom-like"/>
</dbReference>
<dbReference type="InterPro" id="IPR015946">
    <property type="entry name" value="KH_dom-like_a/b"/>
</dbReference>
<dbReference type="InterPro" id="IPR027417">
    <property type="entry name" value="P-loop_NTPase"/>
</dbReference>
<dbReference type="InterPro" id="IPR005225">
    <property type="entry name" value="Small_GTP-bd"/>
</dbReference>
<dbReference type="NCBIfam" id="TIGR03594">
    <property type="entry name" value="GTPase_EngA"/>
    <property type="match status" value="1"/>
</dbReference>
<dbReference type="NCBIfam" id="TIGR00231">
    <property type="entry name" value="small_GTP"/>
    <property type="match status" value="2"/>
</dbReference>
<dbReference type="PANTHER" id="PTHR43834">
    <property type="entry name" value="GTPASE DER"/>
    <property type="match status" value="1"/>
</dbReference>
<dbReference type="PANTHER" id="PTHR43834:SF6">
    <property type="entry name" value="GTPASE DER"/>
    <property type="match status" value="1"/>
</dbReference>
<dbReference type="Pfam" id="PF14714">
    <property type="entry name" value="KH_dom-like"/>
    <property type="match status" value="1"/>
</dbReference>
<dbReference type="Pfam" id="PF01926">
    <property type="entry name" value="MMR_HSR1"/>
    <property type="match status" value="2"/>
</dbReference>
<dbReference type="PIRSF" id="PIRSF006485">
    <property type="entry name" value="GTP-binding_EngA"/>
    <property type="match status" value="1"/>
</dbReference>
<dbReference type="PRINTS" id="PR00326">
    <property type="entry name" value="GTP1OBG"/>
</dbReference>
<dbReference type="SUPFAM" id="SSF52540">
    <property type="entry name" value="P-loop containing nucleoside triphosphate hydrolases"/>
    <property type="match status" value="2"/>
</dbReference>
<dbReference type="PROSITE" id="PS51712">
    <property type="entry name" value="G_ENGA"/>
    <property type="match status" value="2"/>
</dbReference>
<proteinExistence type="inferred from homology"/>
<accession>A4VX53</accession>
<reference key="1">
    <citation type="journal article" date="2007" name="PLoS ONE">
        <title>A glimpse of streptococcal toxic shock syndrome from comparative genomics of S. suis 2 Chinese isolates.</title>
        <authorList>
            <person name="Chen C."/>
            <person name="Tang J."/>
            <person name="Dong W."/>
            <person name="Wang C."/>
            <person name="Feng Y."/>
            <person name="Wang J."/>
            <person name="Zheng F."/>
            <person name="Pan X."/>
            <person name="Liu D."/>
            <person name="Li M."/>
            <person name="Song Y."/>
            <person name="Zhu X."/>
            <person name="Sun H."/>
            <person name="Feng T."/>
            <person name="Guo Z."/>
            <person name="Ju A."/>
            <person name="Ge J."/>
            <person name="Dong Y."/>
            <person name="Sun W."/>
            <person name="Jiang Y."/>
            <person name="Wang J."/>
            <person name="Yan J."/>
            <person name="Yang H."/>
            <person name="Wang X."/>
            <person name="Gao G.F."/>
            <person name="Yang R."/>
            <person name="Wang J."/>
            <person name="Yu J."/>
        </authorList>
    </citation>
    <scope>NUCLEOTIDE SEQUENCE [LARGE SCALE GENOMIC DNA]</scope>
    <source>
        <strain>05ZYH33</strain>
    </source>
</reference>